<gene>
    <name evidence="1" type="primary">mqo</name>
    <name type="ordered locus">BAV0729</name>
</gene>
<comment type="catalytic activity">
    <reaction evidence="1">
        <text>(S)-malate + a quinone = a quinol + oxaloacetate</text>
        <dbReference type="Rhea" id="RHEA:46012"/>
        <dbReference type="ChEBI" id="CHEBI:15589"/>
        <dbReference type="ChEBI" id="CHEBI:16452"/>
        <dbReference type="ChEBI" id="CHEBI:24646"/>
        <dbReference type="ChEBI" id="CHEBI:132124"/>
        <dbReference type="EC" id="1.1.5.4"/>
    </reaction>
</comment>
<comment type="cofactor">
    <cofactor evidence="1">
        <name>FAD</name>
        <dbReference type="ChEBI" id="CHEBI:57692"/>
    </cofactor>
</comment>
<comment type="pathway">
    <text evidence="1">Carbohydrate metabolism; tricarboxylic acid cycle; oxaloacetate from (S)-malate (quinone route): step 1/1.</text>
</comment>
<comment type="similarity">
    <text evidence="1">Belongs to the MQO family.</text>
</comment>
<dbReference type="EC" id="1.1.5.4" evidence="1"/>
<dbReference type="EMBL" id="AM167904">
    <property type="protein sequence ID" value="CAJ48342.1"/>
    <property type="molecule type" value="Genomic_DNA"/>
</dbReference>
<dbReference type="RefSeq" id="WP_012416425.1">
    <property type="nucleotide sequence ID" value="NC_010645.1"/>
</dbReference>
<dbReference type="SMR" id="Q2KX12"/>
<dbReference type="STRING" id="360910.BAV0729"/>
<dbReference type="KEGG" id="bav:BAV0729"/>
<dbReference type="eggNOG" id="COG0579">
    <property type="taxonomic scope" value="Bacteria"/>
</dbReference>
<dbReference type="HOGENOM" id="CLU_028151_0_0_4"/>
<dbReference type="OrthoDB" id="9763983at2"/>
<dbReference type="UniPathway" id="UPA00223">
    <property type="reaction ID" value="UER01008"/>
</dbReference>
<dbReference type="Proteomes" id="UP000001977">
    <property type="component" value="Chromosome"/>
</dbReference>
<dbReference type="GO" id="GO:0047545">
    <property type="term" value="F:2-hydroxyglutarate dehydrogenase activity"/>
    <property type="evidence" value="ECO:0007669"/>
    <property type="project" value="TreeGrafter"/>
</dbReference>
<dbReference type="GO" id="GO:0008924">
    <property type="term" value="F:L-malate dehydrogenase (quinone) activity"/>
    <property type="evidence" value="ECO:0007669"/>
    <property type="project" value="UniProtKB-UniRule"/>
</dbReference>
<dbReference type="GO" id="GO:0006099">
    <property type="term" value="P:tricarboxylic acid cycle"/>
    <property type="evidence" value="ECO:0007669"/>
    <property type="project" value="UniProtKB-UniRule"/>
</dbReference>
<dbReference type="Gene3D" id="3.30.9.10">
    <property type="entry name" value="D-Amino Acid Oxidase, subunit A, domain 2"/>
    <property type="match status" value="1"/>
</dbReference>
<dbReference type="Gene3D" id="3.50.50.60">
    <property type="entry name" value="FAD/NAD(P)-binding domain"/>
    <property type="match status" value="1"/>
</dbReference>
<dbReference type="HAMAP" id="MF_00212">
    <property type="entry name" value="MQO"/>
    <property type="match status" value="1"/>
</dbReference>
<dbReference type="InterPro" id="IPR036188">
    <property type="entry name" value="FAD/NAD-bd_sf"/>
</dbReference>
<dbReference type="InterPro" id="IPR006231">
    <property type="entry name" value="MQO"/>
</dbReference>
<dbReference type="NCBIfam" id="TIGR01320">
    <property type="entry name" value="mal_quin_oxido"/>
    <property type="match status" value="1"/>
</dbReference>
<dbReference type="NCBIfam" id="NF003603">
    <property type="entry name" value="PRK05257.1-1"/>
    <property type="match status" value="1"/>
</dbReference>
<dbReference type="NCBIfam" id="NF003605">
    <property type="entry name" value="PRK05257.1-4"/>
    <property type="match status" value="1"/>
</dbReference>
<dbReference type="NCBIfam" id="NF003606">
    <property type="entry name" value="PRK05257.2-1"/>
    <property type="match status" value="1"/>
</dbReference>
<dbReference type="NCBIfam" id="NF003608">
    <property type="entry name" value="PRK05257.2-4"/>
    <property type="match status" value="1"/>
</dbReference>
<dbReference type="NCBIfam" id="NF003611">
    <property type="entry name" value="PRK05257.3-2"/>
    <property type="match status" value="1"/>
</dbReference>
<dbReference type="NCBIfam" id="NF009875">
    <property type="entry name" value="PRK13339.1"/>
    <property type="match status" value="1"/>
</dbReference>
<dbReference type="PANTHER" id="PTHR43104">
    <property type="entry name" value="L-2-HYDROXYGLUTARATE DEHYDROGENASE, MITOCHONDRIAL"/>
    <property type="match status" value="1"/>
</dbReference>
<dbReference type="PANTHER" id="PTHR43104:SF2">
    <property type="entry name" value="L-2-HYDROXYGLUTARATE DEHYDROGENASE, MITOCHONDRIAL"/>
    <property type="match status" value="1"/>
</dbReference>
<dbReference type="Pfam" id="PF06039">
    <property type="entry name" value="Mqo"/>
    <property type="match status" value="1"/>
</dbReference>
<dbReference type="SUPFAM" id="SSF51905">
    <property type="entry name" value="FAD/NAD(P)-binding domain"/>
    <property type="match status" value="1"/>
</dbReference>
<feature type="chain" id="PRO_0000325488" description="Probable malate:quinone oxidoreductase">
    <location>
        <begin position="1"/>
        <end position="500"/>
    </location>
</feature>
<name>MQO_BORA1</name>
<reference key="1">
    <citation type="journal article" date="2006" name="J. Bacteriol.">
        <title>Comparison of the genome sequence of the poultry pathogen Bordetella avium with those of B. bronchiseptica, B. pertussis, and B. parapertussis reveals extensive diversity in surface structures associated with host interaction.</title>
        <authorList>
            <person name="Sebaihia M."/>
            <person name="Preston A."/>
            <person name="Maskell D.J."/>
            <person name="Kuzmiak H."/>
            <person name="Connell T.D."/>
            <person name="King N.D."/>
            <person name="Orndorff P.E."/>
            <person name="Miyamoto D.M."/>
            <person name="Thomson N.R."/>
            <person name="Harris D."/>
            <person name="Goble A."/>
            <person name="Lord A."/>
            <person name="Murphy L."/>
            <person name="Quail M.A."/>
            <person name="Rutter S."/>
            <person name="Squares R."/>
            <person name="Squares S."/>
            <person name="Woodward J."/>
            <person name="Parkhill J."/>
            <person name="Temple L.M."/>
        </authorList>
    </citation>
    <scope>NUCLEOTIDE SEQUENCE [LARGE SCALE GENOMIC DNA]</scope>
    <source>
        <strain>197N</strain>
    </source>
</reference>
<protein>
    <recommendedName>
        <fullName evidence="1">Probable malate:quinone oxidoreductase</fullName>
        <ecNumber evidence="1">1.1.5.4</ecNumber>
    </recommendedName>
    <alternativeName>
        <fullName evidence="1">MQO</fullName>
    </alternativeName>
    <alternativeName>
        <fullName evidence="1">Malate dehydrogenase [quinone]</fullName>
    </alternativeName>
</protein>
<proteinExistence type="inferred from homology"/>
<keyword id="KW-0274">FAD</keyword>
<keyword id="KW-0285">Flavoprotein</keyword>
<keyword id="KW-0560">Oxidoreductase</keyword>
<keyword id="KW-1185">Reference proteome</keyword>
<keyword id="KW-0816">Tricarboxylic acid cycle</keyword>
<evidence type="ECO:0000255" key="1">
    <source>
        <dbReference type="HAMAP-Rule" id="MF_00212"/>
    </source>
</evidence>
<organism>
    <name type="scientific">Bordetella avium (strain 197N)</name>
    <dbReference type="NCBI Taxonomy" id="360910"/>
    <lineage>
        <taxon>Bacteria</taxon>
        <taxon>Pseudomonadati</taxon>
        <taxon>Pseudomonadota</taxon>
        <taxon>Betaproteobacteria</taxon>
        <taxon>Burkholderiales</taxon>
        <taxon>Alcaligenaceae</taxon>
        <taxon>Bordetella</taxon>
    </lineage>
</organism>
<accession>Q2KX12</accession>
<sequence>MTTTSNLPEQADIVMIGAGIMSATLATVLKALEPSLKIVMLETLNDCAMESSNGWNNAGTGHAANCEMNYTPPRPDGTVDISRALEVNTEFDLSRQLWSYLVKTGAIPDPQAFIHPCPHMSMVWGADNVKYLRQRFKEMSAHHCYRGMEYSEDPKQIAEWVPLVMQGRSGNEPIAVTRIVSGADVDYGALTHLLIKSLTEQAGFEVHYLKHVHDLARQRDGSWRIGIRDRGSKAQQTIQAKFVFVGAGGGAIELLQKSGIPEGHGYGGFPVSGIWLRCDVDSMSERHHAKVYGKAPHGSPPMSVPHLDTRIIGGKRSLLFGPYAGFSSRFLKHGSLTDLFRSVRPGNVLPMLDVAKDNWPLTEYLVSQVLQSAGHQFEMLRQYYPEARNHDWTHAVAGQRVQIIKPGTDKVGVLEFGTELVTSADRSFAALLGASPGASTAAFIALEVLQKCFADKLTADAWLPRLKTVIPTYGVDLKTDAEACFSIRKSTASVLNLDYV</sequence>